<dbReference type="EMBL" id="CP000687">
    <property type="protein sequence ID" value="ABY69798.1"/>
    <property type="molecule type" value="Genomic_DNA"/>
</dbReference>
<dbReference type="RefSeq" id="WP_005598205.1">
    <property type="nucleotide sequence ID" value="NC_010278.1"/>
</dbReference>
<dbReference type="SMR" id="B0BQG3"/>
<dbReference type="KEGG" id="apj:APJL_1242"/>
<dbReference type="HOGENOM" id="CLU_099839_1_0_6"/>
<dbReference type="Proteomes" id="UP000008547">
    <property type="component" value="Chromosome"/>
</dbReference>
<dbReference type="GO" id="GO:0005829">
    <property type="term" value="C:cytosol"/>
    <property type="evidence" value="ECO:0007669"/>
    <property type="project" value="TreeGrafter"/>
</dbReference>
<dbReference type="GO" id="GO:0000166">
    <property type="term" value="F:nucleotide binding"/>
    <property type="evidence" value="ECO:0007669"/>
    <property type="project" value="TreeGrafter"/>
</dbReference>
<dbReference type="CDD" id="cd11740">
    <property type="entry name" value="YajQ_like"/>
    <property type="match status" value="1"/>
</dbReference>
<dbReference type="FunFam" id="3.30.70.860:FF:000001">
    <property type="entry name" value="UPF0234 protein YajQ"/>
    <property type="match status" value="1"/>
</dbReference>
<dbReference type="FunFam" id="3.30.70.990:FF:000001">
    <property type="entry name" value="UPF0234 protein YajQ"/>
    <property type="match status" value="1"/>
</dbReference>
<dbReference type="Gene3D" id="3.30.70.860">
    <property type="match status" value="1"/>
</dbReference>
<dbReference type="Gene3D" id="3.30.70.990">
    <property type="entry name" value="YajQ-like, domain 2"/>
    <property type="match status" value="1"/>
</dbReference>
<dbReference type="HAMAP" id="MF_00632">
    <property type="entry name" value="YajQ"/>
    <property type="match status" value="1"/>
</dbReference>
<dbReference type="InterPro" id="IPR007551">
    <property type="entry name" value="DUF520"/>
</dbReference>
<dbReference type="InterPro" id="IPR035571">
    <property type="entry name" value="UPF0234-like_C"/>
</dbReference>
<dbReference type="InterPro" id="IPR035570">
    <property type="entry name" value="UPF0234_N"/>
</dbReference>
<dbReference type="InterPro" id="IPR036183">
    <property type="entry name" value="YajQ-like_sf"/>
</dbReference>
<dbReference type="NCBIfam" id="NF003819">
    <property type="entry name" value="PRK05412.1"/>
    <property type="match status" value="1"/>
</dbReference>
<dbReference type="PANTHER" id="PTHR30476">
    <property type="entry name" value="UPF0234 PROTEIN YAJQ"/>
    <property type="match status" value="1"/>
</dbReference>
<dbReference type="PANTHER" id="PTHR30476:SF0">
    <property type="entry name" value="UPF0234 PROTEIN YAJQ"/>
    <property type="match status" value="1"/>
</dbReference>
<dbReference type="Pfam" id="PF04461">
    <property type="entry name" value="DUF520"/>
    <property type="match status" value="1"/>
</dbReference>
<dbReference type="SUPFAM" id="SSF89963">
    <property type="entry name" value="YajQ-like"/>
    <property type="match status" value="2"/>
</dbReference>
<evidence type="ECO:0000255" key="1">
    <source>
        <dbReference type="HAMAP-Rule" id="MF_00632"/>
    </source>
</evidence>
<gene>
    <name type="ordered locus">APJL_1242</name>
</gene>
<keyword id="KW-0547">Nucleotide-binding</keyword>
<sequence length="163" mass="18510">MPSFDIVSEITMHEVRNAVENANRVLSTRYDFRGVEAVIELNEKNESIKLTTESDFQLEQLIEILIGSCVKRGIEHNSLDIPSDAEHHGKLYSKEIKLKQGIETEMAKKITKLIKDSKIKVQTQIQGEQVRVTGKSRDDLQAAIQLVKGAELGQPFQFNNFRD</sequence>
<feature type="chain" id="PRO_1000130594" description="Nucleotide-binding protein APJL_1242">
    <location>
        <begin position="1"/>
        <end position="163"/>
    </location>
</feature>
<comment type="function">
    <text evidence="1">Nucleotide-binding protein.</text>
</comment>
<comment type="similarity">
    <text evidence="1">Belongs to the YajQ family.</text>
</comment>
<protein>
    <recommendedName>
        <fullName evidence="1">Nucleotide-binding protein APJL_1242</fullName>
    </recommendedName>
</protein>
<organism>
    <name type="scientific">Actinobacillus pleuropneumoniae serotype 3 (strain JL03)</name>
    <dbReference type="NCBI Taxonomy" id="434271"/>
    <lineage>
        <taxon>Bacteria</taxon>
        <taxon>Pseudomonadati</taxon>
        <taxon>Pseudomonadota</taxon>
        <taxon>Gammaproteobacteria</taxon>
        <taxon>Pasteurellales</taxon>
        <taxon>Pasteurellaceae</taxon>
        <taxon>Actinobacillus</taxon>
    </lineage>
</organism>
<proteinExistence type="inferred from homology"/>
<accession>B0BQG3</accession>
<name>Y1242_ACTPJ</name>
<reference key="1">
    <citation type="journal article" date="2008" name="PLoS ONE">
        <title>Genome biology of Actinobacillus pleuropneumoniae JL03, an isolate of serotype 3 prevalent in China.</title>
        <authorList>
            <person name="Xu Z."/>
            <person name="Zhou Y."/>
            <person name="Li L."/>
            <person name="Zhou R."/>
            <person name="Xiao S."/>
            <person name="Wan Y."/>
            <person name="Zhang S."/>
            <person name="Wang K."/>
            <person name="Li W."/>
            <person name="Li L."/>
            <person name="Jin H."/>
            <person name="Kang M."/>
            <person name="Dalai B."/>
            <person name="Li T."/>
            <person name="Liu L."/>
            <person name="Cheng Y."/>
            <person name="Zhang L."/>
            <person name="Xu T."/>
            <person name="Zheng H."/>
            <person name="Pu S."/>
            <person name="Wang B."/>
            <person name="Gu W."/>
            <person name="Zhang X.L."/>
            <person name="Zhu G.-F."/>
            <person name="Wang S."/>
            <person name="Zhao G.-P."/>
            <person name="Chen H."/>
        </authorList>
    </citation>
    <scope>NUCLEOTIDE SEQUENCE [LARGE SCALE GENOMIC DNA]</scope>
    <source>
        <strain>JL03</strain>
    </source>
</reference>